<reference key="1">
    <citation type="journal article" date="2007" name="Science">
        <title>The Fusarium graminearum genome reveals a link between localized polymorphism and pathogen specialization.</title>
        <authorList>
            <person name="Cuomo C.A."/>
            <person name="Gueldener U."/>
            <person name="Xu J.-R."/>
            <person name="Trail F."/>
            <person name="Turgeon B.G."/>
            <person name="Di Pietro A."/>
            <person name="Walton J.D."/>
            <person name="Ma L.-J."/>
            <person name="Baker S.E."/>
            <person name="Rep M."/>
            <person name="Adam G."/>
            <person name="Antoniw J."/>
            <person name="Baldwin T."/>
            <person name="Calvo S.E."/>
            <person name="Chang Y.-L."/>
            <person name="DeCaprio D."/>
            <person name="Gale L.R."/>
            <person name="Gnerre S."/>
            <person name="Goswami R.S."/>
            <person name="Hammond-Kosack K."/>
            <person name="Harris L.J."/>
            <person name="Hilburn K."/>
            <person name="Kennell J.C."/>
            <person name="Kroken S."/>
            <person name="Magnuson J.K."/>
            <person name="Mannhaupt G."/>
            <person name="Mauceli E.W."/>
            <person name="Mewes H.-W."/>
            <person name="Mitterbauer R."/>
            <person name="Muehlbauer G."/>
            <person name="Muensterkoetter M."/>
            <person name="Nelson D."/>
            <person name="O'Donnell K."/>
            <person name="Ouellet T."/>
            <person name="Qi W."/>
            <person name="Quesneville H."/>
            <person name="Roncero M.I.G."/>
            <person name="Seong K.-Y."/>
            <person name="Tetko I.V."/>
            <person name="Urban M."/>
            <person name="Waalwijk C."/>
            <person name="Ward T.J."/>
            <person name="Yao J."/>
            <person name="Birren B.W."/>
            <person name="Kistler H.C."/>
        </authorList>
    </citation>
    <scope>NUCLEOTIDE SEQUENCE [LARGE SCALE GENOMIC DNA]</scope>
    <source>
        <strain>ATCC MYA-4620 / CBS 123657 / FGSC 9075 / NRRL 31084 / PH-1</strain>
    </source>
</reference>
<reference key="2">
    <citation type="journal article" date="2010" name="Nature">
        <title>Comparative genomics reveals mobile pathogenicity chromosomes in Fusarium.</title>
        <authorList>
            <person name="Ma L.-J."/>
            <person name="van der Does H.C."/>
            <person name="Borkovich K.A."/>
            <person name="Coleman J.J."/>
            <person name="Daboussi M.-J."/>
            <person name="Di Pietro A."/>
            <person name="Dufresne M."/>
            <person name="Freitag M."/>
            <person name="Grabherr M."/>
            <person name="Henrissat B."/>
            <person name="Houterman P.M."/>
            <person name="Kang S."/>
            <person name="Shim W.-B."/>
            <person name="Woloshuk C."/>
            <person name="Xie X."/>
            <person name="Xu J.-R."/>
            <person name="Antoniw J."/>
            <person name="Baker S.E."/>
            <person name="Bluhm B.H."/>
            <person name="Breakspear A."/>
            <person name="Brown D.W."/>
            <person name="Butchko R.A.E."/>
            <person name="Chapman S."/>
            <person name="Coulson R."/>
            <person name="Coutinho P.M."/>
            <person name="Danchin E.G.J."/>
            <person name="Diener A."/>
            <person name="Gale L.R."/>
            <person name="Gardiner D.M."/>
            <person name="Goff S."/>
            <person name="Hammond-Kosack K.E."/>
            <person name="Hilburn K."/>
            <person name="Hua-Van A."/>
            <person name="Jonkers W."/>
            <person name="Kazan K."/>
            <person name="Kodira C.D."/>
            <person name="Koehrsen M."/>
            <person name="Kumar L."/>
            <person name="Lee Y.-H."/>
            <person name="Li L."/>
            <person name="Manners J.M."/>
            <person name="Miranda-Saavedra D."/>
            <person name="Mukherjee M."/>
            <person name="Park G."/>
            <person name="Park J."/>
            <person name="Park S.-Y."/>
            <person name="Proctor R.H."/>
            <person name="Regev A."/>
            <person name="Ruiz-Roldan M.C."/>
            <person name="Sain D."/>
            <person name="Sakthikumar S."/>
            <person name="Sykes S."/>
            <person name="Schwartz D.C."/>
            <person name="Turgeon B.G."/>
            <person name="Wapinski I."/>
            <person name="Yoder O."/>
            <person name="Young S."/>
            <person name="Zeng Q."/>
            <person name="Zhou S."/>
            <person name="Galagan J."/>
            <person name="Cuomo C.A."/>
            <person name="Kistler H.C."/>
            <person name="Rep M."/>
        </authorList>
    </citation>
    <scope>GENOME REANNOTATION</scope>
    <source>
        <strain>ATCC MYA-4620 / CBS 123657 / FGSC 9075 / NRRL 31084 / PH-1</strain>
    </source>
</reference>
<reference key="3">
    <citation type="journal article" date="2015" name="BMC Genomics">
        <title>The completed genome sequence of the pathogenic ascomycete fungus Fusarium graminearum.</title>
        <authorList>
            <person name="King R."/>
            <person name="Urban M."/>
            <person name="Hammond-Kosack M.C.U."/>
            <person name="Hassani-Pak K."/>
            <person name="Hammond-Kosack K.E."/>
        </authorList>
    </citation>
    <scope>NUCLEOTIDE SEQUENCE [LARGE SCALE GENOMIC DNA]</scope>
    <source>
        <strain>ATCC MYA-4620 / CBS 123657 / FGSC 9075 / NRRL 31084 / PH-1</strain>
    </source>
</reference>
<reference key="4">
    <citation type="journal article" date="2012" name="Environ. Microbiol.">
        <title>Production of novel fusarielins by ectopic activation of the polyketide synthase 9 cluster in Fusarium graminearum.</title>
        <authorList>
            <person name="Soerensen J.L."/>
            <person name="Hansen F.T."/>
            <person name="Sondergaard T.E."/>
            <person name="Staerk D."/>
            <person name="Lee T.V."/>
            <person name="Wimmer R."/>
            <person name="Klitgaard L.G."/>
            <person name="Purup S."/>
            <person name="Giese H."/>
            <person name="Frandsen R.J."/>
        </authorList>
    </citation>
    <scope>INDUCTION</scope>
    <scope>FUNCTION</scope>
</reference>
<reference key="5">
    <citation type="journal article" date="2016" name="Molecules">
        <title>Functional Analysis of the Fusarielin Biosynthetic Gene Cluster.</title>
        <authorList>
            <person name="Droce A."/>
            <person name="Saei W."/>
            <person name="Joergensen S.H."/>
            <person name="Wimmer R."/>
            <person name="Giese H."/>
            <person name="Wollenberg R.D."/>
            <person name="Sondergaard T.E."/>
            <person name="Soerensen J.L."/>
        </authorList>
    </citation>
    <scope>FUNCTION</scope>
    <scope>DISRUPTION PHENOTYPE</scope>
    <scope>PATHWAY</scope>
</reference>
<protein>
    <recommendedName>
        <fullName evidence="5">Trans-enoyl reductase FSL5</fullName>
        <ecNumber evidence="7">1.-.-.-</ecNumber>
    </recommendedName>
    <alternativeName>
        <fullName evidence="5">Fusarielin biosynthesis cluster protein 5</fullName>
    </alternativeName>
</protein>
<comment type="function">
    <text evidence="3 4">Trans-enoyl reductase; part of the gene cluster that mediates the biosynthesis of fusarielins F, G and H, decaketide compounds with 5 methylations and a decaline core that act as mycoestrogens as they stimulate growth of MCF-7 breast cancer cells (PubMed:22252016, PubMed:27983606). The initial compound in the pathway is produced by the reducing polyketide synthase FSL1. FSL1 lacks an active enoyl reductase (ER) domain and biosynthesis of fusarielins relies on the trans-acting enoyl reductase FSL5, before it is released through hydrolysis catalyzed by the thioesterase FSL2 (PubMed:22252016, PubMed:27983606). Fusarielins F, G, and H have a C11=C12 cis double bond and is fully reduced between C10 and C11 and between C12 and C13. FSL3 can be involved in the formation of the C11=C12 cis double bond by moving a hypothetical C10=C11 or C12=C13 trans double bond to form prefusarielin (PubMed:27983606). Prefusarielin is oxygenated at C15 and C16 by the cytochrome P450 monooxygenase FSL4, resulting in fusarielin F, which subsequently is epoxidized into fusarielin G by the same enzyme (PubMed:27983606). The final step in the pathway is a reduction of the carboxylic acid moiety to yield fusarielin H via a still undetermined mechanism (PubMed:27983606).</text>
</comment>
<comment type="pathway">
    <text evidence="4">Secondary metabolite biosynthesis.</text>
</comment>
<comment type="subunit">
    <text evidence="1">Monomer.</text>
</comment>
<comment type="induction">
    <text evidence="3">Expression is positively regulated by the fusarielin biosynthesis cluster-specific transcription factor FSL7, probably via its binding at the 5'-CGGNNNCCG-3' motif present in the promoter of all the cluster genes.</text>
</comment>
<comment type="disruption phenotype">
    <text evidence="4">Abolishes the production of fusarielins F, G and H.</text>
</comment>
<comment type="similarity">
    <text evidence="6">Belongs to the zinc-containing alcohol dehydrogenase family.</text>
</comment>
<evidence type="ECO:0000250" key="1">
    <source>
        <dbReference type="UniProtKB" id="Q9Y7D0"/>
    </source>
</evidence>
<evidence type="ECO:0000255" key="2"/>
<evidence type="ECO:0000269" key="3">
    <source>
    </source>
</evidence>
<evidence type="ECO:0000269" key="4">
    <source>
    </source>
</evidence>
<evidence type="ECO:0000303" key="5">
    <source>
    </source>
</evidence>
<evidence type="ECO:0000305" key="6"/>
<evidence type="ECO:0000305" key="7">
    <source>
    </source>
</evidence>
<proteinExistence type="evidence at transcript level"/>
<organism>
    <name type="scientific">Gibberella zeae (strain ATCC MYA-4620 / CBS 123657 / FGSC 9075 / NRRL 31084 / PH-1)</name>
    <name type="common">Wheat head blight fungus</name>
    <name type="synonym">Fusarium graminearum</name>
    <dbReference type="NCBI Taxonomy" id="229533"/>
    <lineage>
        <taxon>Eukaryota</taxon>
        <taxon>Fungi</taxon>
        <taxon>Dikarya</taxon>
        <taxon>Ascomycota</taxon>
        <taxon>Pezizomycotina</taxon>
        <taxon>Sordariomycetes</taxon>
        <taxon>Hypocreomycetidae</taxon>
        <taxon>Hypocreales</taxon>
        <taxon>Nectriaceae</taxon>
        <taxon>Fusarium</taxon>
    </lineage>
</organism>
<sequence length="359" mass="38517">MTNLPSHHTAIVGSEDGSLKVAEQVPLPRLENDMILVRNTAVALNPIDGKMVGNLASVGAVAGMDYVGTVVGIGPKVKTASEIQLGDRVCGAVQGMHSLTPSVGAFAQFVGATDIVTLKVPPSMTVEDAATLGSGVGTIGLALFRSLDVPGYPEAPATERIPVLVYGGSTATGTLAIQLLKLSGLIPITTCSPHNFDLVKSFGAEAVFDYRRPETPDEIRKFTRNSLKYVLDCISEPETMQFCYKCIGRTGGKYTALEPFPQFLHTRPTIQPDWVLGPTLLGKPIGWGPPFERVGDPDVREFAIKWFATAQRLLDQGKLQTHPVKLMEGGFEGILCGLEMLKKKQVSGQKLVYMIPQVA</sequence>
<feature type="chain" id="PRO_0000444963" description="Trans-enoyl reductase FSL5">
    <location>
        <begin position="1"/>
        <end position="359"/>
    </location>
</feature>
<feature type="binding site" evidence="1">
    <location>
        <begin position="47"/>
        <end position="50"/>
    </location>
    <ligand>
        <name>NADP(+)</name>
        <dbReference type="ChEBI" id="CHEBI:58349"/>
    </ligand>
</feature>
<feature type="binding site" evidence="2">
    <location>
        <begin position="134"/>
        <end position="141"/>
    </location>
    <ligand>
        <name>substrate</name>
    </ligand>
</feature>
<feature type="binding site" evidence="1">
    <location>
        <begin position="169"/>
        <end position="172"/>
    </location>
    <ligand>
        <name>NADP(+)</name>
        <dbReference type="ChEBI" id="CHEBI:58349"/>
    </ligand>
</feature>
<feature type="binding site" evidence="1">
    <location>
        <begin position="192"/>
        <end position="195"/>
    </location>
    <ligand>
        <name>NADP(+)</name>
        <dbReference type="ChEBI" id="CHEBI:58349"/>
    </ligand>
</feature>
<feature type="binding site" evidence="1">
    <location>
        <position position="210"/>
    </location>
    <ligand>
        <name>NADP(+)</name>
        <dbReference type="ChEBI" id="CHEBI:58349"/>
    </ligand>
</feature>
<feature type="binding site" evidence="1">
    <location>
        <begin position="257"/>
        <end position="258"/>
    </location>
    <ligand>
        <name>NADP(+)</name>
        <dbReference type="ChEBI" id="CHEBI:58349"/>
    </ligand>
</feature>
<feature type="binding site" evidence="2">
    <location>
        <begin position="277"/>
        <end position="281"/>
    </location>
    <ligand>
        <name>substrate</name>
    </ligand>
</feature>
<feature type="binding site" evidence="1">
    <location>
        <begin position="346"/>
        <end position="347"/>
    </location>
    <ligand>
        <name>NADP(+)</name>
        <dbReference type="ChEBI" id="CHEBI:58349"/>
    </ligand>
</feature>
<name>FSL5_GIBZE</name>
<accession>A0A0E0RXA7</accession>
<gene>
    <name evidence="5" type="primary">FSL5</name>
    <name type="ORF">FG10460</name>
    <name type="ORF">FGRAMPH1_01T08157</name>
</gene>
<keyword id="KW-0521">NADP</keyword>
<keyword id="KW-0547">Nucleotide-binding</keyword>
<keyword id="KW-0560">Oxidoreductase</keyword>
<keyword id="KW-1185">Reference proteome</keyword>
<dbReference type="EC" id="1.-.-.-" evidence="7"/>
<dbReference type="EMBL" id="HG970332">
    <property type="protein sequence ID" value="CEF75882.1"/>
    <property type="molecule type" value="Genomic_DNA"/>
</dbReference>
<dbReference type="SMR" id="A0A0E0RXA7"/>
<dbReference type="FunCoup" id="A0A0E0RXA7">
    <property type="interactions" value="237"/>
</dbReference>
<dbReference type="STRING" id="229533.A0A0E0RXA7"/>
<dbReference type="VEuPathDB" id="FungiDB:FGRAMPH1_01G08157"/>
<dbReference type="eggNOG" id="KOG1198">
    <property type="taxonomic scope" value="Eukaryota"/>
</dbReference>
<dbReference type="InParanoid" id="A0A0E0RXA7"/>
<dbReference type="Proteomes" id="UP000070720">
    <property type="component" value="Chromosome 1"/>
</dbReference>
<dbReference type="GO" id="GO:0000166">
    <property type="term" value="F:nucleotide binding"/>
    <property type="evidence" value="ECO:0007669"/>
    <property type="project" value="UniProtKB-KW"/>
</dbReference>
<dbReference type="GO" id="GO:0016651">
    <property type="term" value="F:oxidoreductase activity, acting on NAD(P)H"/>
    <property type="evidence" value="ECO:0007669"/>
    <property type="project" value="InterPro"/>
</dbReference>
<dbReference type="CDD" id="cd08249">
    <property type="entry name" value="enoyl_reductase_like"/>
    <property type="match status" value="1"/>
</dbReference>
<dbReference type="Gene3D" id="3.90.180.10">
    <property type="entry name" value="Medium-chain alcohol dehydrogenases, catalytic domain"/>
    <property type="match status" value="1"/>
</dbReference>
<dbReference type="Gene3D" id="3.40.50.720">
    <property type="entry name" value="NAD(P)-binding Rossmann-like Domain"/>
    <property type="match status" value="1"/>
</dbReference>
<dbReference type="InterPro" id="IPR013149">
    <property type="entry name" value="ADH-like_C"/>
</dbReference>
<dbReference type="InterPro" id="IPR013154">
    <property type="entry name" value="ADH-like_N"/>
</dbReference>
<dbReference type="InterPro" id="IPR011032">
    <property type="entry name" value="GroES-like_sf"/>
</dbReference>
<dbReference type="InterPro" id="IPR036291">
    <property type="entry name" value="NAD(P)-bd_dom_sf"/>
</dbReference>
<dbReference type="InterPro" id="IPR020843">
    <property type="entry name" value="PKS_ER"/>
</dbReference>
<dbReference type="InterPro" id="IPR047122">
    <property type="entry name" value="Trans-enoyl_RdTase-like"/>
</dbReference>
<dbReference type="PANTHER" id="PTHR45348">
    <property type="entry name" value="HYPOTHETICAL OXIDOREDUCTASE (EUROFUNG)"/>
    <property type="match status" value="1"/>
</dbReference>
<dbReference type="PANTHER" id="PTHR45348:SF1">
    <property type="entry name" value="TRANS-ENOYL REDUCTASE STHE"/>
    <property type="match status" value="1"/>
</dbReference>
<dbReference type="Pfam" id="PF08240">
    <property type="entry name" value="ADH_N"/>
    <property type="match status" value="1"/>
</dbReference>
<dbReference type="Pfam" id="PF00107">
    <property type="entry name" value="ADH_zinc_N"/>
    <property type="match status" value="1"/>
</dbReference>
<dbReference type="SMART" id="SM00829">
    <property type="entry name" value="PKS_ER"/>
    <property type="match status" value="1"/>
</dbReference>
<dbReference type="SUPFAM" id="SSF50129">
    <property type="entry name" value="GroES-like"/>
    <property type="match status" value="1"/>
</dbReference>
<dbReference type="SUPFAM" id="SSF51735">
    <property type="entry name" value="NAD(P)-binding Rossmann-fold domains"/>
    <property type="match status" value="1"/>
</dbReference>